<accession>Q2KYS4</accession>
<gene>
    <name evidence="1" type="primary">metG</name>
    <name type="ordered locus">BAV0472</name>
</gene>
<feature type="chain" id="PRO_0000331785" description="Methionine--tRNA ligase">
    <location>
        <begin position="1"/>
        <end position="691"/>
    </location>
</feature>
<feature type="domain" description="tRNA-binding" evidence="1">
    <location>
        <begin position="585"/>
        <end position="691"/>
    </location>
</feature>
<feature type="short sequence motif" description="'HIGH' region">
    <location>
        <begin position="12"/>
        <end position="22"/>
    </location>
</feature>
<feature type="short sequence motif" description="'KMSKS' region">
    <location>
        <begin position="341"/>
        <end position="345"/>
    </location>
</feature>
<feature type="binding site" evidence="1">
    <location>
        <position position="143"/>
    </location>
    <ligand>
        <name>Zn(2+)</name>
        <dbReference type="ChEBI" id="CHEBI:29105"/>
    </ligand>
</feature>
<feature type="binding site" evidence="1">
    <location>
        <position position="146"/>
    </location>
    <ligand>
        <name>Zn(2+)</name>
        <dbReference type="ChEBI" id="CHEBI:29105"/>
    </ligand>
</feature>
<feature type="binding site" evidence="1">
    <location>
        <position position="156"/>
    </location>
    <ligand>
        <name>Zn(2+)</name>
        <dbReference type="ChEBI" id="CHEBI:29105"/>
    </ligand>
</feature>
<feature type="binding site" evidence="1">
    <location>
        <position position="159"/>
    </location>
    <ligand>
        <name>Zn(2+)</name>
        <dbReference type="ChEBI" id="CHEBI:29105"/>
    </ligand>
</feature>
<feature type="binding site" evidence="1">
    <location>
        <position position="344"/>
    </location>
    <ligand>
        <name>ATP</name>
        <dbReference type="ChEBI" id="CHEBI:30616"/>
    </ligand>
</feature>
<comment type="function">
    <text evidence="1">Is required not only for elongation of protein synthesis but also for the initiation of all mRNA translation through initiator tRNA(fMet) aminoacylation.</text>
</comment>
<comment type="catalytic activity">
    <reaction evidence="1">
        <text>tRNA(Met) + L-methionine + ATP = L-methionyl-tRNA(Met) + AMP + diphosphate</text>
        <dbReference type="Rhea" id="RHEA:13481"/>
        <dbReference type="Rhea" id="RHEA-COMP:9667"/>
        <dbReference type="Rhea" id="RHEA-COMP:9698"/>
        <dbReference type="ChEBI" id="CHEBI:30616"/>
        <dbReference type="ChEBI" id="CHEBI:33019"/>
        <dbReference type="ChEBI" id="CHEBI:57844"/>
        <dbReference type="ChEBI" id="CHEBI:78442"/>
        <dbReference type="ChEBI" id="CHEBI:78530"/>
        <dbReference type="ChEBI" id="CHEBI:456215"/>
        <dbReference type="EC" id="6.1.1.10"/>
    </reaction>
</comment>
<comment type="cofactor">
    <cofactor evidence="1">
        <name>Zn(2+)</name>
        <dbReference type="ChEBI" id="CHEBI:29105"/>
    </cofactor>
    <text evidence="1">Binds 1 zinc ion per subunit.</text>
</comment>
<comment type="subunit">
    <text evidence="1">Homodimer.</text>
</comment>
<comment type="subcellular location">
    <subcellularLocation>
        <location evidence="1">Cytoplasm</location>
    </subcellularLocation>
</comment>
<comment type="similarity">
    <text evidence="1">Belongs to the class-I aminoacyl-tRNA synthetase family. MetG type 1 subfamily.</text>
</comment>
<keyword id="KW-0030">Aminoacyl-tRNA synthetase</keyword>
<keyword id="KW-0067">ATP-binding</keyword>
<keyword id="KW-0963">Cytoplasm</keyword>
<keyword id="KW-0436">Ligase</keyword>
<keyword id="KW-0479">Metal-binding</keyword>
<keyword id="KW-0547">Nucleotide-binding</keyword>
<keyword id="KW-0648">Protein biosynthesis</keyword>
<keyword id="KW-1185">Reference proteome</keyword>
<keyword id="KW-0694">RNA-binding</keyword>
<keyword id="KW-0820">tRNA-binding</keyword>
<keyword id="KW-0862">Zinc</keyword>
<evidence type="ECO:0000255" key="1">
    <source>
        <dbReference type="HAMAP-Rule" id="MF_00098"/>
    </source>
</evidence>
<sequence>MSRTLFVTTALPYANGSFHIGHIMEYIQADIWVRSMRMAGHTVHFVGADDAHGAPIMLKAEKEGITPQALVARYAAERPRYLDGFHIRFDHWHSTDSAENVALSHEIYRALKAAGLIETRSIEQFFDPVKGMFLADRYIKGECPRCHAKDQYGDSCEVCGAVYAPTELIQPYSALTGATPVLKRSDHFFFKLSDPRCVEFLQQWTTGSNRNGIKHLQSEVQAKTREWLGGEEGEAKLGDWDISRDAPYFGIEIPDAPGKYFYVWLDAPVGYLASLKSYCDKIGLDFDALLDPSSATEQVHFIGKDIIYFHALFWPAMLKFAGRKTPDALNVHGFITVSGEKMSKSRGTGISPLRYLEVGMDPEWLRYYMAAKLNARVEDMDFNPEDFIARVNSDLVGKYVNIASRAANFITRHFEGKLAYLGDTAALSAEFAQQTESIRAALEAREFNRAIREIMAYADGINQAFDAAQPWVLAKGFAEADEARRAQLQDICSRALAGFKALSVMLAPVLPALTSRVARDLFGAQRDFIWSDAADLPAQVAPFKHLMQRVDPQMLDALFEPPAELAAPAPTPGGEALADTISIDDFVKVDLRIAKIINCEEVEGSTKLLRLTLDAGEGRHRNVFSGIKSFYKPQDLIGKLTVLVANLAPRKMKFGVSEGMVLAASHADEKVDAGIYVLEPWPGAQPGMRIH</sequence>
<protein>
    <recommendedName>
        <fullName evidence="1">Methionine--tRNA ligase</fullName>
        <ecNumber evidence="1">6.1.1.10</ecNumber>
    </recommendedName>
    <alternativeName>
        <fullName evidence="1">Methionyl-tRNA synthetase</fullName>
        <shortName evidence="1">MetRS</shortName>
    </alternativeName>
</protein>
<reference key="1">
    <citation type="journal article" date="2006" name="J. Bacteriol.">
        <title>Comparison of the genome sequence of the poultry pathogen Bordetella avium with those of B. bronchiseptica, B. pertussis, and B. parapertussis reveals extensive diversity in surface structures associated with host interaction.</title>
        <authorList>
            <person name="Sebaihia M."/>
            <person name="Preston A."/>
            <person name="Maskell D.J."/>
            <person name="Kuzmiak H."/>
            <person name="Connell T.D."/>
            <person name="King N.D."/>
            <person name="Orndorff P.E."/>
            <person name="Miyamoto D.M."/>
            <person name="Thomson N.R."/>
            <person name="Harris D."/>
            <person name="Goble A."/>
            <person name="Lord A."/>
            <person name="Murphy L."/>
            <person name="Quail M.A."/>
            <person name="Rutter S."/>
            <person name="Squares R."/>
            <person name="Squares S."/>
            <person name="Woodward J."/>
            <person name="Parkhill J."/>
            <person name="Temple L.M."/>
        </authorList>
    </citation>
    <scope>NUCLEOTIDE SEQUENCE [LARGE SCALE GENOMIC DNA]</scope>
    <source>
        <strain>197N</strain>
    </source>
</reference>
<organism>
    <name type="scientific">Bordetella avium (strain 197N)</name>
    <dbReference type="NCBI Taxonomy" id="360910"/>
    <lineage>
        <taxon>Bacteria</taxon>
        <taxon>Pseudomonadati</taxon>
        <taxon>Pseudomonadota</taxon>
        <taxon>Betaproteobacteria</taxon>
        <taxon>Burkholderiales</taxon>
        <taxon>Alcaligenaceae</taxon>
        <taxon>Bordetella</taxon>
    </lineage>
</organism>
<name>SYM_BORA1</name>
<dbReference type="EC" id="6.1.1.10" evidence="1"/>
<dbReference type="EMBL" id="AM167904">
    <property type="protein sequence ID" value="CAJ48077.1"/>
    <property type="molecule type" value="Genomic_DNA"/>
</dbReference>
<dbReference type="RefSeq" id="WP_012416168.1">
    <property type="nucleotide sequence ID" value="NC_010645.1"/>
</dbReference>
<dbReference type="SMR" id="Q2KYS4"/>
<dbReference type="STRING" id="360910.BAV0472"/>
<dbReference type="KEGG" id="bav:BAV0472"/>
<dbReference type="eggNOG" id="COG0073">
    <property type="taxonomic scope" value="Bacteria"/>
</dbReference>
<dbReference type="eggNOG" id="COG0143">
    <property type="taxonomic scope" value="Bacteria"/>
</dbReference>
<dbReference type="HOGENOM" id="CLU_009710_7_0_4"/>
<dbReference type="OrthoDB" id="9810191at2"/>
<dbReference type="Proteomes" id="UP000001977">
    <property type="component" value="Chromosome"/>
</dbReference>
<dbReference type="GO" id="GO:0005829">
    <property type="term" value="C:cytosol"/>
    <property type="evidence" value="ECO:0007669"/>
    <property type="project" value="TreeGrafter"/>
</dbReference>
<dbReference type="GO" id="GO:0005524">
    <property type="term" value="F:ATP binding"/>
    <property type="evidence" value="ECO:0007669"/>
    <property type="project" value="UniProtKB-UniRule"/>
</dbReference>
<dbReference type="GO" id="GO:0046872">
    <property type="term" value="F:metal ion binding"/>
    <property type="evidence" value="ECO:0007669"/>
    <property type="project" value="UniProtKB-KW"/>
</dbReference>
<dbReference type="GO" id="GO:0004825">
    <property type="term" value="F:methionine-tRNA ligase activity"/>
    <property type="evidence" value="ECO:0007669"/>
    <property type="project" value="UniProtKB-UniRule"/>
</dbReference>
<dbReference type="GO" id="GO:0000049">
    <property type="term" value="F:tRNA binding"/>
    <property type="evidence" value="ECO:0007669"/>
    <property type="project" value="UniProtKB-KW"/>
</dbReference>
<dbReference type="GO" id="GO:0006431">
    <property type="term" value="P:methionyl-tRNA aminoacylation"/>
    <property type="evidence" value="ECO:0007669"/>
    <property type="project" value="UniProtKB-UniRule"/>
</dbReference>
<dbReference type="CDD" id="cd07957">
    <property type="entry name" value="Anticodon_Ia_Met"/>
    <property type="match status" value="1"/>
</dbReference>
<dbReference type="CDD" id="cd00814">
    <property type="entry name" value="MetRS_core"/>
    <property type="match status" value="1"/>
</dbReference>
<dbReference type="CDD" id="cd02800">
    <property type="entry name" value="tRNA_bind_EcMetRS_like"/>
    <property type="match status" value="1"/>
</dbReference>
<dbReference type="FunFam" id="2.20.28.20:FF:000001">
    <property type="entry name" value="Methionine--tRNA ligase"/>
    <property type="match status" value="1"/>
</dbReference>
<dbReference type="FunFam" id="2.40.50.140:FF:000042">
    <property type="entry name" value="Methionine--tRNA ligase"/>
    <property type="match status" value="1"/>
</dbReference>
<dbReference type="Gene3D" id="3.40.50.620">
    <property type="entry name" value="HUPs"/>
    <property type="match status" value="1"/>
</dbReference>
<dbReference type="Gene3D" id="1.10.730.10">
    <property type="entry name" value="Isoleucyl-tRNA Synthetase, Domain 1"/>
    <property type="match status" value="1"/>
</dbReference>
<dbReference type="Gene3D" id="2.20.28.20">
    <property type="entry name" value="Methionyl-tRNA synthetase, Zn-domain"/>
    <property type="match status" value="1"/>
</dbReference>
<dbReference type="Gene3D" id="2.40.50.140">
    <property type="entry name" value="Nucleic acid-binding proteins"/>
    <property type="match status" value="1"/>
</dbReference>
<dbReference type="HAMAP" id="MF_00098">
    <property type="entry name" value="Met_tRNA_synth_type1"/>
    <property type="match status" value="1"/>
</dbReference>
<dbReference type="InterPro" id="IPR001412">
    <property type="entry name" value="aa-tRNA-synth_I_CS"/>
</dbReference>
<dbReference type="InterPro" id="IPR041872">
    <property type="entry name" value="Anticodon_Met"/>
</dbReference>
<dbReference type="InterPro" id="IPR004495">
    <property type="entry name" value="Met-tRNA-synth_bsu_C"/>
</dbReference>
<dbReference type="InterPro" id="IPR023458">
    <property type="entry name" value="Met-tRNA_ligase_1"/>
</dbReference>
<dbReference type="InterPro" id="IPR014758">
    <property type="entry name" value="Met-tRNA_synth"/>
</dbReference>
<dbReference type="InterPro" id="IPR015413">
    <property type="entry name" value="Methionyl/Leucyl_tRNA_Synth"/>
</dbReference>
<dbReference type="InterPro" id="IPR033911">
    <property type="entry name" value="MetRS_core"/>
</dbReference>
<dbReference type="InterPro" id="IPR029038">
    <property type="entry name" value="MetRS_Zn"/>
</dbReference>
<dbReference type="InterPro" id="IPR012340">
    <property type="entry name" value="NA-bd_OB-fold"/>
</dbReference>
<dbReference type="InterPro" id="IPR014729">
    <property type="entry name" value="Rossmann-like_a/b/a_fold"/>
</dbReference>
<dbReference type="InterPro" id="IPR002547">
    <property type="entry name" value="tRNA-bd_dom"/>
</dbReference>
<dbReference type="InterPro" id="IPR009080">
    <property type="entry name" value="tRNAsynth_Ia_anticodon-bd"/>
</dbReference>
<dbReference type="NCBIfam" id="TIGR00398">
    <property type="entry name" value="metG"/>
    <property type="match status" value="1"/>
</dbReference>
<dbReference type="NCBIfam" id="TIGR00399">
    <property type="entry name" value="metG_C_term"/>
    <property type="match status" value="1"/>
</dbReference>
<dbReference type="NCBIfam" id="NF001100">
    <property type="entry name" value="PRK00133.1"/>
    <property type="match status" value="1"/>
</dbReference>
<dbReference type="PANTHER" id="PTHR45765">
    <property type="entry name" value="METHIONINE--TRNA LIGASE"/>
    <property type="match status" value="1"/>
</dbReference>
<dbReference type="PANTHER" id="PTHR45765:SF1">
    <property type="entry name" value="METHIONINE--TRNA LIGASE, CYTOPLASMIC"/>
    <property type="match status" value="1"/>
</dbReference>
<dbReference type="Pfam" id="PF09334">
    <property type="entry name" value="tRNA-synt_1g"/>
    <property type="match status" value="1"/>
</dbReference>
<dbReference type="Pfam" id="PF01588">
    <property type="entry name" value="tRNA_bind"/>
    <property type="match status" value="1"/>
</dbReference>
<dbReference type="PRINTS" id="PR01041">
    <property type="entry name" value="TRNASYNTHMET"/>
</dbReference>
<dbReference type="SUPFAM" id="SSF47323">
    <property type="entry name" value="Anticodon-binding domain of a subclass of class I aminoacyl-tRNA synthetases"/>
    <property type="match status" value="1"/>
</dbReference>
<dbReference type="SUPFAM" id="SSF57770">
    <property type="entry name" value="Methionyl-tRNA synthetase (MetRS), Zn-domain"/>
    <property type="match status" value="1"/>
</dbReference>
<dbReference type="SUPFAM" id="SSF50249">
    <property type="entry name" value="Nucleic acid-binding proteins"/>
    <property type="match status" value="1"/>
</dbReference>
<dbReference type="SUPFAM" id="SSF52374">
    <property type="entry name" value="Nucleotidylyl transferase"/>
    <property type="match status" value="1"/>
</dbReference>
<dbReference type="PROSITE" id="PS00178">
    <property type="entry name" value="AA_TRNA_LIGASE_I"/>
    <property type="match status" value="1"/>
</dbReference>
<dbReference type="PROSITE" id="PS50886">
    <property type="entry name" value="TRBD"/>
    <property type="match status" value="1"/>
</dbReference>
<proteinExistence type="inferred from homology"/>